<gene>
    <name type="primary">lsrB</name>
    <name type="ordered locus">plu3146</name>
</gene>
<protein>
    <recommendedName>
        <fullName>Autoinducer 2-binding protein LsrB</fullName>
        <shortName>AI-2-binding protein LsrB</shortName>
    </recommendedName>
</protein>
<dbReference type="EMBL" id="BX571869">
    <property type="protein sequence ID" value="CAE15520.1"/>
    <property type="molecule type" value="Genomic_DNA"/>
</dbReference>
<dbReference type="RefSeq" id="WP_011147357.1">
    <property type="nucleotide sequence ID" value="NC_005126.1"/>
</dbReference>
<dbReference type="SMR" id="Q7MB18"/>
<dbReference type="STRING" id="243265.plu3146"/>
<dbReference type="GeneID" id="48849405"/>
<dbReference type="KEGG" id="plu:plu3146"/>
<dbReference type="eggNOG" id="COG1879">
    <property type="taxonomic scope" value="Bacteria"/>
</dbReference>
<dbReference type="HOGENOM" id="CLU_037628_3_0_6"/>
<dbReference type="OrthoDB" id="9781890at2"/>
<dbReference type="Proteomes" id="UP000002514">
    <property type="component" value="Chromosome"/>
</dbReference>
<dbReference type="GO" id="GO:0043190">
    <property type="term" value="C:ATP-binding cassette (ABC) transporter complex"/>
    <property type="evidence" value="ECO:0007669"/>
    <property type="project" value="InterPro"/>
</dbReference>
<dbReference type="GO" id="GO:0030288">
    <property type="term" value="C:outer membrane-bounded periplasmic space"/>
    <property type="evidence" value="ECO:0007669"/>
    <property type="project" value="TreeGrafter"/>
</dbReference>
<dbReference type="GO" id="GO:0030246">
    <property type="term" value="F:carbohydrate binding"/>
    <property type="evidence" value="ECO:0007669"/>
    <property type="project" value="TreeGrafter"/>
</dbReference>
<dbReference type="CDD" id="cd20003">
    <property type="entry name" value="PBP1_LsrB_Quorum_Sensing"/>
    <property type="match status" value="1"/>
</dbReference>
<dbReference type="Gene3D" id="3.40.50.2300">
    <property type="match status" value="2"/>
</dbReference>
<dbReference type="InterPro" id="IPR050555">
    <property type="entry name" value="Bact_Solute-Bind_Prot2"/>
</dbReference>
<dbReference type="InterPro" id="IPR030159">
    <property type="entry name" value="LsrB"/>
</dbReference>
<dbReference type="InterPro" id="IPR028082">
    <property type="entry name" value="Peripla_BP_I"/>
</dbReference>
<dbReference type="InterPro" id="IPR025997">
    <property type="entry name" value="SBP_2_dom"/>
</dbReference>
<dbReference type="NCBIfam" id="NF011937">
    <property type="entry name" value="PRK15408.1"/>
    <property type="match status" value="1"/>
</dbReference>
<dbReference type="PANTHER" id="PTHR30036:SF7">
    <property type="entry name" value="ABC TRANSPORTER PERIPLASMIC-BINDING PROTEIN YPHF"/>
    <property type="match status" value="1"/>
</dbReference>
<dbReference type="PANTHER" id="PTHR30036">
    <property type="entry name" value="D-XYLOSE-BINDING PERIPLASMIC PROTEIN"/>
    <property type="match status" value="1"/>
</dbReference>
<dbReference type="Pfam" id="PF13407">
    <property type="entry name" value="Peripla_BP_4"/>
    <property type="match status" value="1"/>
</dbReference>
<dbReference type="SUPFAM" id="SSF53822">
    <property type="entry name" value="Periplasmic binding protein-like I"/>
    <property type="match status" value="1"/>
</dbReference>
<keyword id="KW-0574">Periplasm</keyword>
<keyword id="KW-1185">Reference proteome</keyword>
<keyword id="KW-0732">Signal</keyword>
<name>LSRB_PHOLL</name>
<reference key="1">
    <citation type="journal article" date="2003" name="Nat. Biotechnol.">
        <title>The genome sequence of the entomopathogenic bacterium Photorhabdus luminescens.</title>
        <authorList>
            <person name="Duchaud E."/>
            <person name="Rusniok C."/>
            <person name="Frangeul L."/>
            <person name="Buchrieser C."/>
            <person name="Givaudan A."/>
            <person name="Taourit S."/>
            <person name="Bocs S."/>
            <person name="Boursaux-Eude C."/>
            <person name="Chandler M."/>
            <person name="Charles J.-F."/>
            <person name="Dassa E."/>
            <person name="Derose R."/>
            <person name="Derzelle S."/>
            <person name="Freyssinet G."/>
            <person name="Gaudriault S."/>
            <person name="Medigue C."/>
            <person name="Lanois A."/>
            <person name="Powell K."/>
            <person name="Siguier P."/>
            <person name="Vincent R."/>
            <person name="Wingate V."/>
            <person name="Zouine M."/>
            <person name="Glaser P."/>
            <person name="Boemare N."/>
            <person name="Danchin A."/>
            <person name="Kunst F."/>
        </authorList>
    </citation>
    <scope>NUCLEOTIDE SEQUENCE [LARGE SCALE GENOMIC DNA]</scope>
    <source>
        <strain>DSM 15139 / CIP 105565 / TT01</strain>
    </source>
</reference>
<proteinExistence type="inferred from homology"/>
<feature type="signal peptide" evidence="2">
    <location>
        <begin position="1"/>
        <end position="25"/>
    </location>
</feature>
<feature type="chain" id="PRO_0000351323" description="Autoinducer 2-binding protein LsrB">
    <location>
        <begin position="26"/>
        <end position="339"/>
    </location>
</feature>
<accession>Q7MB18</accession>
<organism>
    <name type="scientific">Photorhabdus laumondii subsp. laumondii (strain DSM 15139 / CIP 105565 / TT01)</name>
    <name type="common">Photorhabdus luminescens subsp. laumondii</name>
    <dbReference type="NCBI Taxonomy" id="243265"/>
    <lineage>
        <taxon>Bacteria</taxon>
        <taxon>Pseudomonadati</taxon>
        <taxon>Pseudomonadota</taxon>
        <taxon>Gammaproteobacteria</taxon>
        <taxon>Enterobacterales</taxon>
        <taxon>Morganellaceae</taxon>
        <taxon>Photorhabdus</taxon>
    </lineage>
</organism>
<comment type="function">
    <text evidence="1">Part of the ABC transporter complex LsrABCD involved in autoinducer 2 (AI-2) import. Binds AI-2 and delivers it to the LsrC and LsrD permeases (By similarity).</text>
</comment>
<comment type="subunit">
    <text evidence="1">The complex is composed of two ATP-binding proteins (LsrA), two transmembrane proteins (LsrC and LsrD) and a solute-binding protein (LsrB).</text>
</comment>
<comment type="subcellular location">
    <subcellularLocation>
        <location evidence="3">Periplasm</location>
    </subcellularLocation>
</comment>
<comment type="similarity">
    <text evidence="3">Belongs to the bacterial solute-binding protein 2 family.</text>
</comment>
<evidence type="ECO:0000250" key="1"/>
<evidence type="ECO:0000255" key="2"/>
<evidence type="ECO:0000305" key="3"/>
<sequence>MKTLILKKLALISLLSLACASWVHAAERIAFIPKLVGVGFFTSGGQGAVAAGKALGVNVTYDGPTEPSVAGQVQLINNFVNQGYNAIVVSAVSPDGLCPALKRAMQRGVKILTWDSDTSPECRSIYINQGTPNQLGGMLVDMAANQVQKKQAKVAFFYSSPTVTDQNQWVKEAKDKIAAEHPGWEIVTTQFGYNDATKSLQTAEGILKAWSDLDAIIAPDANALPAAAQAAENLKRQNVAIVGFSTPNVMRPYVERGTVKQFGLWDVVNQGKISIHVANELLKKGDLNVGDKLDIPDIGMVEVVPNRVQGYRYEAKGNGIVVLPERVIFTKDNINQYDF</sequence>